<comment type="function">
    <text evidence="1">Aspartyl-tRNA synthetase with relaxed tRNA specificity since it is able to aspartylate not only its cognate tRNA(Asp) but also tRNA(Asn). Reaction proceeds in two steps: L-aspartate is first activated by ATP to form Asp-AMP and then transferred to the acceptor end of tRNA(Asp/Asn).</text>
</comment>
<comment type="catalytic activity">
    <reaction evidence="1">
        <text>tRNA(Asx) + L-aspartate + ATP = L-aspartyl-tRNA(Asx) + AMP + diphosphate</text>
        <dbReference type="Rhea" id="RHEA:18349"/>
        <dbReference type="Rhea" id="RHEA-COMP:9710"/>
        <dbReference type="Rhea" id="RHEA-COMP:9711"/>
        <dbReference type="ChEBI" id="CHEBI:29991"/>
        <dbReference type="ChEBI" id="CHEBI:30616"/>
        <dbReference type="ChEBI" id="CHEBI:33019"/>
        <dbReference type="ChEBI" id="CHEBI:78442"/>
        <dbReference type="ChEBI" id="CHEBI:78516"/>
        <dbReference type="ChEBI" id="CHEBI:456215"/>
        <dbReference type="EC" id="6.1.1.23"/>
    </reaction>
</comment>
<comment type="subunit">
    <text evidence="1">Homodimer.</text>
</comment>
<comment type="subcellular location">
    <subcellularLocation>
        <location evidence="1">Cytoplasm</location>
    </subcellularLocation>
</comment>
<comment type="similarity">
    <text evidence="1">Belongs to the class-II aminoacyl-tRNA synthetase family. Type 1 subfamily.</text>
</comment>
<name>SYDND_RICAH</name>
<keyword id="KW-0030">Aminoacyl-tRNA synthetase</keyword>
<keyword id="KW-0067">ATP-binding</keyword>
<keyword id="KW-0963">Cytoplasm</keyword>
<keyword id="KW-0436">Ligase</keyword>
<keyword id="KW-0547">Nucleotide-binding</keyword>
<keyword id="KW-0648">Protein biosynthesis</keyword>
<reference key="1">
    <citation type="submission" date="2007-09" db="EMBL/GenBank/DDBJ databases">
        <title>Complete genome sequence of Rickettsia akari.</title>
        <authorList>
            <person name="Madan A."/>
            <person name="Fahey J."/>
            <person name="Helton E."/>
            <person name="Ketteman M."/>
            <person name="Madan A."/>
            <person name="Rodrigues S."/>
            <person name="Sanchez A."/>
            <person name="Whiting M."/>
            <person name="Dasch G."/>
            <person name="Eremeeva M."/>
        </authorList>
    </citation>
    <scope>NUCLEOTIDE SEQUENCE [LARGE SCALE GENOMIC DNA]</scope>
    <source>
        <strain>Hartford</strain>
    </source>
</reference>
<protein>
    <recommendedName>
        <fullName evidence="1">Aspartate--tRNA(Asp/Asn) ligase</fullName>
        <ecNumber evidence="1">6.1.1.23</ecNumber>
    </recommendedName>
    <alternativeName>
        <fullName evidence="1">Aspartyl-tRNA synthetase</fullName>
        <shortName evidence="1">AspRS</shortName>
    </alternativeName>
    <alternativeName>
        <fullName evidence="1">Non-discriminating aspartyl-tRNA synthetase</fullName>
        <shortName evidence="1">ND-AspRS</shortName>
    </alternativeName>
</protein>
<feature type="chain" id="PRO_1000006745" description="Aspartate--tRNA(Asp/Asn) ligase">
    <location>
        <begin position="1"/>
        <end position="602"/>
    </location>
</feature>
<feature type="region of interest" description="Aspartate" evidence="1">
    <location>
        <begin position="200"/>
        <end position="203"/>
    </location>
</feature>
<feature type="binding site" evidence="1">
    <location>
        <position position="176"/>
    </location>
    <ligand>
        <name>L-aspartate</name>
        <dbReference type="ChEBI" id="CHEBI:29991"/>
    </ligand>
</feature>
<feature type="binding site" evidence="1">
    <location>
        <begin position="222"/>
        <end position="224"/>
    </location>
    <ligand>
        <name>ATP</name>
        <dbReference type="ChEBI" id="CHEBI:30616"/>
    </ligand>
</feature>
<feature type="binding site" evidence="1">
    <location>
        <position position="222"/>
    </location>
    <ligand>
        <name>L-aspartate</name>
        <dbReference type="ChEBI" id="CHEBI:29991"/>
    </ligand>
</feature>
<feature type="binding site" evidence="1">
    <location>
        <position position="452"/>
    </location>
    <ligand>
        <name>L-aspartate</name>
        <dbReference type="ChEBI" id="CHEBI:29991"/>
    </ligand>
</feature>
<feature type="binding site" evidence="1">
    <location>
        <position position="490"/>
    </location>
    <ligand>
        <name>ATP</name>
        <dbReference type="ChEBI" id="CHEBI:30616"/>
    </ligand>
</feature>
<feature type="binding site" evidence="1">
    <location>
        <position position="497"/>
    </location>
    <ligand>
        <name>L-aspartate</name>
        <dbReference type="ChEBI" id="CHEBI:29991"/>
    </ligand>
</feature>
<feature type="binding site" evidence="1">
    <location>
        <begin position="542"/>
        <end position="545"/>
    </location>
    <ligand>
        <name>ATP</name>
        <dbReference type="ChEBI" id="CHEBI:30616"/>
    </ligand>
</feature>
<feature type="site" description="Important for tRNA non-discrimination" evidence="1">
    <location>
        <position position="33"/>
    </location>
</feature>
<organism>
    <name type="scientific">Rickettsia akari (strain Hartford)</name>
    <dbReference type="NCBI Taxonomy" id="293614"/>
    <lineage>
        <taxon>Bacteria</taxon>
        <taxon>Pseudomonadati</taxon>
        <taxon>Pseudomonadota</taxon>
        <taxon>Alphaproteobacteria</taxon>
        <taxon>Rickettsiales</taxon>
        <taxon>Rickettsiaceae</taxon>
        <taxon>Rickettsieae</taxon>
        <taxon>Rickettsia</taxon>
        <taxon>spotted fever group</taxon>
    </lineage>
</organism>
<accession>A8GMB3</accession>
<dbReference type="EC" id="6.1.1.23" evidence="1"/>
<dbReference type="EMBL" id="CP000847">
    <property type="protein sequence ID" value="ABV74538.1"/>
    <property type="molecule type" value="Genomic_DNA"/>
</dbReference>
<dbReference type="RefSeq" id="WP_012013408.1">
    <property type="nucleotide sequence ID" value="NC_009881.1"/>
</dbReference>
<dbReference type="SMR" id="A8GMB3"/>
<dbReference type="STRING" id="293614.A1C_01040"/>
<dbReference type="KEGG" id="rak:A1C_01040"/>
<dbReference type="eggNOG" id="COG0173">
    <property type="taxonomic scope" value="Bacteria"/>
</dbReference>
<dbReference type="HOGENOM" id="CLU_014330_3_2_5"/>
<dbReference type="Proteomes" id="UP000006830">
    <property type="component" value="Chromosome"/>
</dbReference>
<dbReference type="GO" id="GO:0005737">
    <property type="term" value="C:cytoplasm"/>
    <property type="evidence" value="ECO:0007669"/>
    <property type="project" value="UniProtKB-SubCell"/>
</dbReference>
<dbReference type="GO" id="GO:0004815">
    <property type="term" value="F:aspartate-tRNA ligase activity"/>
    <property type="evidence" value="ECO:0007669"/>
    <property type="project" value="UniProtKB-UniRule"/>
</dbReference>
<dbReference type="GO" id="GO:0050560">
    <property type="term" value="F:aspartate-tRNA(Asn) ligase activity"/>
    <property type="evidence" value="ECO:0007669"/>
    <property type="project" value="UniProtKB-EC"/>
</dbReference>
<dbReference type="GO" id="GO:0005524">
    <property type="term" value="F:ATP binding"/>
    <property type="evidence" value="ECO:0007669"/>
    <property type="project" value="UniProtKB-UniRule"/>
</dbReference>
<dbReference type="GO" id="GO:0003676">
    <property type="term" value="F:nucleic acid binding"/>
    <property type="evidence" value="ECO:0007669"/>
    <property type="project" value="InterPro"/>
</dbReference>
<dbReference type="GO" id="GO:0006422">
    <property type="term" value="P:aspartyl-tRNA aminoacylation"/>
    <property type="evidence" value="ECO:0007669"/>
    <property type="project" value="UniProtKB-UniRule"/>
</dbReference>
<dbReference type="CDD" id="cd00777">
    <property type="entry name" value="AspRS_core"/>
    <property type="match status" value="1"/>
</dbReference>
<dbReference type="CDD" id="cd04317">
    <property type="entry name" value="EcAspRS_like_N"/>
    <property type="match status" value="1"/>
</dbReference>
<dbReference type="Gene3D" id="3.30.930.10">
    <property type="entry name" value="Bira Bifunctional Protein, Domain 2"/>
    <property type="match status" value="1"/>
</dbReference>
<dbReference type="Gene3D" id="3.30.1360.30">
    <property type="entry name" value="GAD-like domain"/>
    <property type="match status" value="1"/>
</dbReference>
<dbReference type="Gene3D" id="2.40.50.140">
    <property type="entry name" value="Nucleic acid-binding proteins"/>
    <property type="match status" value="1"/>
</dbReference>
<dbReference type="HAMAP" id="MF_00044">
    <property type="entry name" value="Asp_tRNA_synth_type1"/>
    <property type="match status" value="1"/>
</dbReference>
<dbReference type="InterPro" id="IPR004364">
    <property type="entry name" value="Aa-tRNA-synt_II"/>
</dbReference>
<dbReference type="InterPro" id="IPR006195">
    <property type="entry name" value="aa-tRNA-synth_II"/>
</dbReference>
<dbReference type="InterPro" id="IPR045864">
    <property type="entry name" value="aa-tRNA-synth_II/BPL/LPL"/>
</dbReference>
<dbReference type="InterPro" id="IPR004524">
    <property type="entry name" value="Asp-tRNA-ligase_1"/>
</dbReference>
<dbReference type="InterPro" id="IPR047089">
    <property type="entry name" value="Asp-tRNA-ligase_1_N"/>
</dbReference>
<dbReference type="InterPro" id="IPR002312">
    <property type="entry name" value="Asp/Asn-tRNA-synth_IIb"/>
</dbReference>
<dbReference type="InterPro" id="IPR047090">
    <property type="entry name" value="AspRS_core"/>
</dbReference>
<dbReference type="InterPro" id="IPR004115">
    <property type="entry name" value="GAD-like_sf"/>
</dbReference>
<dbReference type="InterPro" id="IPR029351">
    <property type="entry name" value="GAD_dom"/>
</dbReference>
<dbReference type="InterPro" id="IPR012340">
    <property type="entry name" value="NA-bd_OB-fold"/>
</dbReference>
<dbReference type="InterPro" id="IPR004365">
    <property type="entry name" value="NA-bd_OB_tRNA"/>
</dbReference>
<dbReference type="NCBIfam" id="TIGR00459">
    <property type="entry name" value="aspS_bact"/>
    <property type="match status" value="1"/>
</dbReference>
<dbReference type="NCBIfam" id="NF001750">
    <property type="entry name" value="PRK00476.1"/>
    <property type="match status" value="1"/>
</dbReference>
<dbReference type="PANTHER" id="PTHR22594:SF5">
    <property type="entry name" value="ASPARTATE--TRNA LIGASE, MITOCHONDRIAL"/>
    <property type="match status" value="1"/>
</dbReference>
<dbReference type="PANTHER" id="PTHR22594">
    <property type="entry name" value="ASPARTYL/LYSYL-TRNA SYNTHETASE"/>
    <property type="match status" value="1"/>
</dbReference>
<dbReference type="Pfam" id="PF02938">
    <property type="entry name" value="GAD"/>
    <property type="match status" value="1"/>
</dbReference>
<dbReference type="Pfam" id="PF00152">
    <property type="entry name" value="tRNA-synt_2"/>
    <property type="match status" value="1"/>
</dbReference>
<dbReference type="Pfam" id="PF01336">
    <property type="entry name" value="tRNA_anti-codon"/>
    <property type="match status" value="1"/>
</dbReference>
<dbReference type="PRINTS" id="PR01042">
    <property type="entry name" value="TRNASYNTHASP"/>
</dbReference>
<dbReference type="SUPFAM" id="SSF55681">
    <property type="entry name" value="Class II aaRS and biotin synthetases"/>
    <property type="match status" value="1"/>
</dbReference>
<dbReference type="SUPFAM" id="SSF55261">
    <property type="entry name" value="GAD domain-like"/>
    <property type="match status" value="1"/>
</dbReference>
<dbReference type="SUPFAM" id="SSF50249">
    <property type="entry name" value="Nucleic acid-binding proteins"/>
    <property type="match status" value="1"/>
</dbReference>
<dbReference type="PROSITE" id="PS50862">
    <property type="entry name" value="AA_TRNA_LIGASE_II"/>
    <property type="match status" value="1"/>
</dbReference>
<proteinExistence type="inferred from homology"/>
<evidence type="ECO:0000255" key="1">
    <source>
        <dbReference type="HAMAP-Rule" id="MF_00044"/>
    </source>
</evidence>
<sequence length="602" mass="68112">MHKYRTHNCSELQISDVGQEVKLSGWVHRRRDHGNLVFIDLRDHYGIIQIVFTDQNPQLMEDASRLRYESVVTVRGTVVARSEDTINNTLPTGHVEVLAVEFIVESAADTLPFVINTEKDAPEDSRLKHRFLDLRREKLHNNIILRSQIISHIRHLMMARGFTEFQTPILTASSPEGARDFLVPSRMHPGKFYALPQAPQQFKQLLMVSGFDRYFQIAPCFRDEDARADRSPGEFYQLDLEMSFVTQEDVFSTIEPVMYDLFNKFTDKKVSATPFVRIPYNESMLKYGSDKPDLRNTIIISDVTEIFRDSDFTIFRENIRKGSIVRAIPAPKAATMPRSFFDKMIEFAISEGAGGLGYIQFSETGETKGAVAKFLSTQQLDSLKATASISNGDAVFFVSDKKEKAARLAGKVRIRLGEELDLLEKDCFKFCWITDFPFYELNEETGKIDFSHNPFSMPQGGLEALENAKTTEALLELNAYQYDIVCNGIELSSGAIRNHKPDIMYKAFSIAGYSEEEVNKRFGGMIRAFKFGAPPHGGIAPGIDRIVMLLAEATNIREVIAFPLNQQAEDLLMNAPSYVEDKALKELSIMLSPSARKNAKKE</sequence>
<gene>
    <name evidence="1" type="primary">aspS</name>
    <name type="ordered locus">A1C_01040</name>
</gene>